<sequence>MSKLEAILSQEVEAEIQALLQEAEAKAEAVKREAEEKAKALLQARERALEAQYRAALRRAESAGELLVATARTQARGEVLEEVRRRVREALEALPKKPEWPEVVRKLALEALEALPGAKALVANPEDLPHLEALAKERGVELKAEPALRLGVRAVGAEGKTQVENSLLARLDRAWDALSSKVAQALWG</sequence>
<keyword id="KW-0066">ATP synthesis</keyword>
<keyword id="KW-0375">Hydrogen ion transport</keyword>
<keyword id="KW-0406">Ion transport</keyword>
<keyword id="KW-0813">Transport</keyword>
<gene>
    <name evidence="1" type="primary">atpE</name>
    <name type="ordered locus">TT_C0910</name>
</gene>
<name>VATE_THET2</name>
<dbReference type="EMBL" id="AE017221">
    <property type="protein sequence ID" value="AAS81254.1"/>
    <property type="molecule type" value="Genomic_DNA"/>
</dbReference>
<dbReference type="RefSeq" id="WP_011173337.1">
    <property type="nucleotide sequence ID" value="NC_005835.1"/>
</dbReference>
<dbReference type="SMR" id="Q72J69"/>
<dbReference type="KEGG" id="tth:TT_C0910"/>
<dbReference type="eggNOG" id="COG1390">
    <property type="taxonomic scope" value="Bacteria"/>
</dbReference>
<dbReference type="HOGENOM" id="CLU_123924_0_0_0"/>
<dbReference type="OrthoDB" id="26328at2"/>
<dbReference type="Proteomes" id="UP000000592">
    <property type="component" value="Chromosome"/>
</dbReference>
<dbReference type="GO" id="GO:0033178">
    <property type="term" value="C:proton-transporting two-sector ATPase complex, catalytic domain"/>
    <property type="evidence" value="ECO:0007669"/>
    <property type="project" value="InterPro"/>
</dbReference>
<dbReference type="GO" id="GO:0005524">
    <property type="term" value="F:ATP binding"/>
    <property type="evidence" value="ECO:0007669"/>
    <property type="project" value="UniProtKB-UniRule"/>
</dbReference>
<dbReference type="GO" id="GO:0046933">
    <property type="term" value="F:proton-transporting ATP synthase activity, rotational mechanism"/>
    <property type="evidence" value="ECO:0007669"/>
    <property type="project" value="UniProtKB-UniRule"/>
</dbReference>
<dbReference type="GO" id="GO:0046961">
    <property type="term" value="F:proton-transporting ATPase activity, rotational mechanism"/>
    <property type="evidence" value="ECO:0007669"/>
    <property type="project" value="InterPro"/>
</dbReference>
<dbReference type="GO" id="GO:0042777">
    <property type="term" value="P:proton motive force-driven plasma membrane ATP synthesis"/>
    <property type="evidence" value="ECO:0007669"/>
    <property type="project" value="UniProtKB-UniRule"/>
</dbReference>
<dbReference type="Gene3D" id="3.30.2320.30">
    <property type="entry name" value="ATP synthase, E subunit, C-terminal"/>
    <property type="match status" value="1"/>
</dbReference>
<dbReference type="Gene3D" id="1.20.5.620">
    <property type="entry name" value="F1F0 ATP synthase subunit B, membrane domain"/>
    <property type="match status" value="1"/>
</dbReference>
<dbReference type="HAMAP" id="MF_00311">
    <property type="entry name" value="ATP_synth_E_arch"/>
    <property type="match status" value="1"/>
</dbReference>
<dbReference type="InterPro" id="IPR038495">
    <property type="entry name" value="ATPase_E_C"/>
</dbReference>
<dbReference type="InterPro" id="IPR002842">
    <property type="entry name" value="ATPase_V1_Esu"/>
</dbReference>
<dbReference type="Pfam" id="PF01991">
    <property type="entry name" value="vATP-synt_E"/>
    <property type="match status" value="1"/>
</dbReference>
<dbReference type="SUPFAM" id="SSF160527">
    <property type="entry name" value="V-type ATPase subunit E-like"/>
    <property type="match status" value="1"/>
</dbReference>
<evidence type="ECO:0000255" key="1">
    <source>
        <dbReference type="HAMAP-Rule" id="MF_00311"/>
    </source>
</evidence>
<feature type="chain" id="PRO_1000059422" description="V-type ATP synthase subunit E">
    <location>
        <begin position="1"/>
        <end position="188"/>
    </location>
</feature>
<proteinExistence type="inferred from homology"/>
<comment type="function">
    <text evidence="1">Produces ATP from ADP in the presence of a proton gradient across the membrane.</text>
</comment>
<comment type="similarity">
    <text evidence="1">Belongs to the V-ATPase E subunit family.</text>
</comment>
<organism>
    <name type="scientific">Thermus thermophilus (strain ATCC BAA-163 / DSM 7039 / HB27)</name>
    <dbReference type="NCBI Taxonomy" id="262724"/>
    <lineage>
        <taxon>Bacteria</taxon>
        <taxon>Thermotogati</taxon>
        <taxon>Deinococcota</taxon>
        <taxon>Deinococci</taxon>
        <taxon>Thermales</taxon>
        <taxon>Thermaceae</taxon>
        <taxon>Thermus</taxon>
    </lineage>
</organism>
<protein>
    <recommendedName>
        <fullName>V-type ATP synthase subunit E</fullName>
    </recommendedName>
    <alternativeName>
        <fullName evidence="1">V-ATPase subunit E</fullName>
    </alternativeName>
</protein>
<reference key="1">
    <citation type="journal article" date="2004" name="Nat. Biotechnol.">
        <title>The genome sequence of the extreme thermophile Thermus thermophilus.</title>
        <authorList>
            <person name="Henne A."/>
            <person name="Brueggemann H."/>
            <person name="Raasch C."/>
            <person name="Wiezer A."/>
            <person name="Hartsch T."/>
            <person name="Liesegang H."/>
            <person name="Johann A."/>
            <person name="Lienard T."/>
            <person name="Gohl O."/>
            <person name="Martinez-Arias R."/>
            <person name="Jacobi C."/>
            <person name="Starkuviene V."/>
            <person name="Schlenczeck S."/>
            <person name="Dencker S."/>
            <person name="Huber R."/>
            <person name="Klenk H.-P."/>
            <person name="Kramer W."/>
            <person name="Merkl R."/>
            <person name="Gottschalk G."/>
            <person name="Fritz H.-J."/>
        </authorList>
    </citation>
    <scope>NUCLEOTIDE SEQUENCE [LARGE SCALE GENOMIC DNA]</scope>
    <source>
        <strain>ATCC BAA-163 / DSM 7039 / HB27</strain>
    </source>
</reference>
<accession>Q72J69</accession>